<protein>
    <recommendedName>
        <fullName evidence="1">Photosystem II CP47 reaction center protein</fullName>
    </recommendedName>
    <alternativeName>
        <fullName evidence="1">PSII 47 kDa protein</fullName>
    </alternativeName>
    <alternativeName>
        <fullName evidence="1">Protein CP-47</fullName>
    </alternativeName>
</protein>
<evidence type="ECO:0000255" key="1">
    <source>
        <dbReference type="HAMAP-Rule" id="MF_01495"/>
    </source>
</evidence>
<gene>
    <name evidence="1" type="primary">psbB</name>
</gene>
<sequence>MGLPWYRVHTVVLNDPGRLLSVHIMHTALVAGWAGSMALYELAVFDPSDPVLDPMWRQGMFVIPFMTRLGITNSWGGWSITGGTITNSGIWSYEGVAGAHIVLSGLCFLAAIWHWVYWDLEIFSDERTGKPSLDLPKIFGIHLFLSGVACFGFGAFHVTGLYGPGIWVSDPYGLTGRVQSVNPAWGVGGFDPFVPGGIASHHIAAGTLGILAGLFHLSVRPPQRLYKGLRMGNIETVLSSSIAAVFFAAFVVAGTMWYGSATTPIELFGPTRYQWDQGYFQQEIYRRIGAGLAENQSLSEAWSKIPEKLAFYDYIGNNPAKGGLFRAGSMDNGDGIAVGWLGHPVFRDKEGRELFVRRMPTFFETFPVVLVDGDGIVRADVPFRRAESKYSVEQVGVTVEFYGGELNGVSYSDPATVKKYARRAQLGEIFELDRAALKSDGVFRSSPRGWFTFGHVSFALLFFFGHIWHGARTLFRDVFAGIDPDLDAQVEFGAFQKLGDPTTKRQAV</sequence>
<dbReference type="EMBL" id="DQ897681">
    <property type="protein sequence ID" value="ABI17309.1"/>
    <property type="molecule type" value="Genomic_DNA"/>
</dbReference>
<dbReference type="EMBL" id="DQ897681">
    <property type="protein sequence ID" value="ABI17331.1"/>
    <property type="molecule type" value="Genomic_DNA"/>
</dbReference>
<dbReference type="RefSeq" id="YP_784117.1">
    <property type="nucleotide sequence ID" value="NC_008454.1"/>
</dbReference>
<dbReference type="RefSeq" id="YP_784139.1">
    <property type="nucleotide sequence ID" value="NC_008454.1"/>
</dbReference>
<dbReference type="SMR" id="Q06FP2"/>
<dbReference type="GeneID" id="4362791"/>
<dbReference type="GeneID" id="4362868"/>
<dbReference type="GO" id="GO:0009535">
    <property type="term" value="C:chloroplast thylakoid membrane"/>
    <property type="evidence" value="ECO:0007669"/>
    <property type="project" value="UniProtKB-SubCell"/>
</dbReference>
<dbReference type="GO" id="GO:0009523">
    <property type="term" value="C:photosystem II"/>
    <property type="evidence" value="ECO:0007669"/>
    <property type="project" value="UniProtKB-KW"/>
</dbReference>
<dbReference type="GO" id="GO:0016168">
    <property type="term" value="F:chlorophyll binding"/>
    <property type="evidence" value="ECO:0007669"/>
    <property type="project" value="UniProtKB-UniRule"/>
</dbReference>
<dbReference type="GO" id="GO:0045156">
    <property type="term" value="F:electron transporter, transferring electrons within the cyclic electron transport pathway of photosynthesis activity"/>
    <property type="evidence" value="ECO:0007669"/>
    <property type="project" value="InterPro"/>
</dbReference>
<dbReference type="GO" id="GO:0009772">
    <property type="term" value="P:photosynthetic electron transport in photosystem II"/>
    <property type="evidence" value="ECO:0007669"/>
    <property type="project" value="InterPro"/>
</dbReference>
<dbReference type="FunFam" id="3.10.680.10:FF:000001">
    <property type="entry name" value="Photosystem II CP47 reaction center protein"/>
    <property type="match status" value="1"/>
</dbReference>
<dbReference type="Gene3D" id="3.10.680.10">
    <property type="entry name" value="Photosystem II CP47 reaction center protein"/>
    <property type="match status" value="1"/>
</dbReference>
<dbReference type="HAMAP" id="MF_01495">
    <property type="entry name" value="PSII_PsbB_CP47"/>
    <property type="match status" value="1"/>
</dbReference>
<dbReference type="InterPro" id="IPR000932">
    <property type="entry name" value="PS_antenna-like"/>
</dbReference>
<dbReference type="InterPro" id="IPR036001">
    <property type="entry name" value="PS_II_antenna-like_sf"/>
</dbReference>
<dbReference type="InterPro" id="IPR017486">
    <property type="entry name" value="PSII_PsbB"/>
</dbReference>
<dbReference type="NCBIfam" id="TIGR03039">
    <property type="entry name" value="PS_II_CP47"/>
    <property type="match status" value="1"/>
</dbReference>
<dbReference type="PANTHER" id="PTHR33180">
    <property type="entry name" value="PHOTOSYSTEM II CP43 REACTION CENTER PROTEIN"/>
    <property type="match status" value="1"/>
</dbReference>
<dbReference type="PANTHER" id="PTHR33180:SF38">
    <property type="entry name" value="PHOTOSYSTEM II CP47 REACTION CENTER PROTEIN"/>
    <property type="match status" value="1"/>
</dbReference>
<dbReference type="Pfam" id="PF00421">
    <property type="entry name" value="PSII"/>
    <property type="match status" value="1"/>
</dbReference>
<dbReference type="SUPFAM" id="SSF161077">
    <property type="entry name" value="Photosystem II antenna protein-like"/>
    <property type="match status" value="1"/>
</dbReference>
<keyword id="KW-0148">Chlorophyll</keyword>
<keyword id="KW-0150">Chloroplast</keyword>
<keyword id="KW-0157">Chromophore</keyword>
<keyword id="KW-0472">Membrane</keyword>
<keyword id="KW-0602">Photosynthesis</keyword>
<keyword id="KW-0604">Photosystem II</keyword>
<keyword id="KW-0934">Plastid</keyword>
<keyword id="KW-0793">Thylakoid</keyword>
<keyword id="KW-0812">Transmembrane</keyword>
<keyword id="KW-1133">Transmembrane helix</keyword>
<geneLocation type="chloroplast"/>
<name>PSBB_PELHO</name>
<reference key="1">
    <citation type="journal article" date="2006" name="Mol. Biol. Evol.">
        <title>The complete chloroplast genome sequence of Pelargonium x hortorum: organization and evolution of the largest and most highly rearranged chloroplast genome of land plants.</title>
        <authorList>
            <person name="Chumley T.W."/>
            <person name="Palmer J.D."/>
            <person name="Mower J.P."/>
            <person name="Fourcade H.M."/>
            <person name="Calie P.J."/>
            <person name="Boore J.L."/>
            <person name="Jansen R.K."/>
        </authorList>
    </citation>
    <scope>NUCLEOTIDE SEQUENCE [LARGE SCALE GENOMIC DNA]</scope>
    <source>
        <strain>cv. Ringo White</strain>
    </source>
</reference>
<organism>
    <name type="scientific">Pelargonium hortorum</name>
    <name type="common">Common geranium</name>
    <name type="synonym">Pelargonium inquinans x Pelargonium zonale</name>
    <dbReference type="NCBI Taxonomy" id="4031"/>
    <lineage>
        <taxon>Eukaryota</taxon>
        <taxon>Viridiplantae</taxon>
        <taxon>Streptophyta</taxon>
        <taxon>Embryophyta</taxon>
        <taxon>Tracheophyta</taxon>
        <taxon>Spermatophyta</taxon>
        <taxon>Magnoliopsida</taxon>
        <taxon>eudicotyledons</taxon>
        <taxon>Gunneridae</taxon>
        <taxon>Pentapetalae</taxon>
        <taxon>rosids</taxon>
        <taxon>malvids</taxon>
        <taxon>Geraniales</taxon>
        <taxon>Geraniaceae</taxon>
        <taxon>Pelargonium</taxon>
    </lineage>
</organism>
<accession>Q06FP2</accession>
<comment type="function">
    <text evidence="1">One of the components of the core complex of photosystem II (PSII). It binds chlorophyll and helps catalyze the primary light-induced photochemical processes of PSII. PSII is a light-driven water:plastoquinone oxidoreductase, using light energy to abstract electrons from H(2)O, generating O(2) and a proton gradient subsequently used for ATP formation.</text>
</comment>
<comment type="cofactor">
    <text evidence="1">Binds multiple chlorophylls. PSII binds additional chlorophylls, carotenoids and specific lipids.</text>
</comment>
<comment type="subunit">
    <text evidence="1">PSII is composed of 1 copy each of membrane proteins PsbA, PsbB, PsbC, PsbD, PsbE, PsbF, PsbH, PsbI, PsbJ, PsbK, PsbL, PsbM, PsbT, PsbX, PsbY, PsbZ, Psb30/Ycf12, at least 3 peripheral proteins of the oxygen-evolving complex and a large number of cofactors. It forms dimeric complexes.</text>
</comment>
<comment type="subcellular location">
    <subcellularLocation>
        <location evidence="1">Plastid</location>
        <location evidence="1">Chloroplast thylakoid membrane</location>
        <topology evidence="1">Multi-pass membrane protein</topology>
    </subcellularLocation>
</comment>
<comment type="similarity">
    <text evidence="1">Belongs to the PsbB/PsbC family. PsbB subfamily.</text>
</comment>
<proteinExistence type="inferred from homology"/>
<feature type="chain" id="PRO_0000359852" description="Photosystem II CP47 reaction center protein">
    <location>
        <begin position="1"/>
        <end position="508"/>
    </location>
</feature>
<feature type="transmembrane region" description="Helical" evidence="1">
    <location>
        <begin position="21"/>
        <end position="36"/>
    </location>
</feature>
<feature type="transmembrane region" description="Helical" evidence="1">
    <location>
        <begin position="101"/>
        <end position="115"/>
    </location>
</feature>
<feature type="transmembrane region" description="Helical" evidence="1">
    <location>
        <begin position="140"/>
        <end position="156"/>
    </location>
</feature>
<feature type="transmembrane region" description="Helical" evidence="1">
    <location>
        <begin position="203"/>
        <end position="218"/>
    </location>
</feature>
<feature type="transmembrane region" description="Helical" evidence="1">
    <location>
        <begin position="237"/>
        <end position="252"/>
    </location>
</feature>
<feature type="transmembrane region" description="Helical" evidence="1">
    <location>
        <begin position="457"/>
        <end position="472"/>
    </location>
</feature>